<sequence>MNCGKIILLFITIIGVAKSREENCKCGWDNPSRIVNGVETEINEFPMVARLIYPSPGMYCGGTIITPQHIVTAAHCLQKYKRTNYTGIHVVVGEHDYTTDTETNVTKRYTIAEVTIHPNYNSHNNDIAIVKTNERFEYSMKVGPVCLPFNYMTRNLTNETVTALGWGKLRYNGQNSKVLRKVDLHVITREQCETHYGAAIANANLLCTFDVGRDACQNDSGGPILWRSPTTDNLILVGVVNFGRTCADDAPGGNARVTSFMEFIHNATIGETYCKAD</sequence>
<comment type="subcellular location">
    <subcellularLocation>
        <location evidence="1">Secreted</location>
    </subcellularLocation>
</comment>
<comment type="tissue specificity">
    <text>Expressed by the venom duct.</text>
</comment>
<comment type="allergen">
    <text evidence="1">Causes an allergic reaction in human.</text>
</comment>
<comment type="similarity">
    <text evidence="3">Belongs to the peptidase S1 family.</text>
</comment>
<name>SP4_POLDO</name>
<feature type="signal peptide" evidence="2">
    <location>
        <begin position="1"/>
        <end position="19"/>
    </location>
</feature>
<feature type="chain" id="PRO_5000090673" description="Venom serine protease">
    <location>
        <begin position="20"/>
        <end position="277"/>
    </location>
</feature>
<feature type="domain" description="Peptidase S1" evidence="3">
    <location>
        <begin position="34"/>
        <end position="269"/>
    </location>
</feature>
<feature type="active site" description="Charge relay system" evidence="1">
    <location>
        <position position="75"/>
    </location>
</feature>
<feature type="active site" description="Charge relay system" evidence="1">
    <location>
        <position position="126"/>
    </location>
</feature>
<feature type="active site" description="Charge relay system" evidence="1">
    <location>
        <position position="220"/>
    </location>
</feature>
<feature type="glycosylation site" description="N-linked (GlcNAc...) asparagine" evidence="2">
    <location>
        <position position="84"/>
    </location>
</feature>
<feature type="glycosylation site" description="N-linked (GlcNAc...) asparagine" evidence="2">
    <location>
        <position position="104"/>
    </location>
</feature>
<feature type="glycosylation site" description="N-linked (GlcNAc...) asparagine" evidence="2">
    <location>
        <position position="155"/>
    </location>
</feature>
<feature type="glycosylation site" description="N-linked (GlcNAc...) asparagine" evidence="2">
    <location>
        <position position="158"/>
    </location>
</feature>
<feature type="glycosylation site" description="N-linked (GlcNAc...) asparagine" evidence="2">
    <location>
        <position position="218"/>
    </location>
</feature>
<feature type="glycosylation site" description="N-linked (GlcNAc...) asparagine" evidence="2">
    <location>
        <position position="266"/>
    </location>
</feature>
<feature type="disulfide bond" evidence="3">
    <location>
        <begin position="60"/>
        <end position="76"/>
    </location>
</feature>
<feature type="disulfide bond" evidence="3">
    <location>
        <begin position="192"/>
        <end position="207"/>
    </location>
</feature>
<feature type="disulfide bond" evidence="3">
    <location>
        <begin position="216"/>
        <end position="246"/>
    </location>
</feature>
<dbReference type="EC" id="3.4.21.-"/>
<dbReference type="EMBL" id="AY285998">
    <property type="protein sequence ID" value="AAP37412.1"/>
    <property type="molecule type" value="mRNA"/>
</dbReference>
<dbReference type="RefSeq" id="NP_001310266.1">
    <property type="nucleotide sequence ID" value="NM_001323337.1"/>
</dbReference>
<dbReference type="SMR" id="Q7Z269"/>
<dbReference type="Allergome" id="3437">
    <property type="allergen name" value="Pol d 4.0101"/>
</dbReference>
<dbReference type="Allergome" id="587">
    <property type="allergen name" value="Pol d 4"/>
</dbReference>
<dbReference type="MEROPS" id="S01.492"/>
<dbReference type="EnsemblMetazoa" id="XM_015328755.1">
    <property type="protein sequence ID" value="XP_015184241.1"/>
    <property type="gene ID" value="LOC107070494"/>
</dbReference>
<dbReference type="GeneID" id="107070494"/>
<dbReference type="OrthoDB" id="6380398at2759"/>
<dbReference type="Proteomes" id="UP000694924">
    <property type="component" value="Unplaced"/>
</dbReference>
<dbReference type="GO" id="GO:0005576">
    <property type="term" value="C:extracellular region"/>
    <property type="evidence" value="ECO:0007669"/>
    <property type="project" value="UniProtKB-SubCell"/>
</dbReference>
<dbReference type="GO" id="GO:0004252">
    <property type="term" value="F:serine-type endopeptidase activity"/>
    <property type="evidence" value="ECO:0007669"/>
    <property type="project" value="InterPro"/>
</dbReference>
<dbReference type="GO" id="GO:0006508">
    <property type="term" value="P:proteolysis"/>
    <property type="evidence" value="ECO:0007669"/>
    <property type="project" value="UniProtKB-KW"/>
</dbReference>
<dbReference type="CDD" id="cd00190">
    <property type="entry name" value="Tryp_SPc"/>
    <property type="match status" value="1"/>
</dbReference>
<dbReference type="FunFam" id="2.40.10.10:FF:000054">
    <property type="entry name" value="Complement C1r subcomponent"/>
    <property type="match status" value="1"/>
</dbReference>
<dbReference type="FunFam" id="2.40.10.10:FF:000068">
    <property type="entry name" value="transmembrane protease serine 2"/>
    <property type="match status" value="1"/>
</dbReference>
<dbReference type="Gene3D" id="2.40.10.10">
    <property type="entry name" value="Trypsin-like serine proteases"/>
    <property type="match status" value="1"/>
</dbReference>
<dbReference type="InterPro" id="IPR009003">
    <property type="entry name" value="Peptidase_S1_PA"/>
</dbReference>
<dbReference type="InterPro" id="IPR043504">
    <property type="entry name" value="Peptidase_S1_PA_chymotrypsin"/>
</dbReference>
<dbReference type="InterPro" id="IPR001314">
    <property type="entry name" value="Peptidase_S1A"/>
</dbReference>
<dbReference type="InterPro" id="IPR051487">
    <property type="entry name" value="Ser/Thr_Proteases_Immune/Dev"/>
</dbReference>
<dbReference type="InterPro" id="IPR001254">
    <property type="entry name" value="Trypsin_dom"/>
</dbReference>
<dbReference type="InterPro" id="IPR018114">
    <property type="entry name" value="TRYPSIN_HIS"/>
</dbReference>
<dbReference type="PANTHER" id="PTHR24256">
    <property type="entry name" value="TRYPTASE-RELATED"/>
    <property type="match status" value="1"/>
</dbReference>
<dbReference type="Pfam" id="PF00089">
    <property type="entry name" value="Trypsin"/>
    <property type="match status" value="1"/>
</dbReference>
<dbReference type="PRINTS" id="PR00722">
    <property type="entry name" value="CHYMOTRYPSIN"/>
</dbReference>
<dbReference type="SMART" id="SM00020">
    <property type="entry name" value="Tryp_SPc"/>
    <property type="match status" value="1"/>
</dbReference>
<dbReference type="SUPFAM" id="SSF50494">
    <property type="entry name" value="Trypsin-like serine proteases"/>
    <property type="match status" value="1"/>
</dbReference>
<dbReference type="PROSITE" id="PS50240">
    <property type="entry name" value="TRYPSIN_DOM"/>
    <property type="match status" value="1"/>
</dbReference>
<dbReference type="PROSITE" id="PS00134">
    <property type="entry name" value="TRYPSIN_HIS"/>
    <property type="match status" value="1"/>
</dbReference>
<organism>
    <name type="scientific">Polistes dominula</name>
    <name type="common">European paper wasp</name>
    <name type="synonym">Vespa dominula</name>
    <dbReference type="NCBI Taxonomy" id="743375"/>
    <lineage>
        <taxon>Eukaryota</taxon>
        <taxon>Metazoa</taxon>
        <taxon>Ecdysozoa</taxon>
        <taxon>Arthropoda</taxon>
        <taxon>Hexapoda</taxon>
        <taxon>Insecta</taxon>
        <taxon>Pterygota</taxon>
        <taxon>Neoptera</taxon>
        <taxon>Endopterygota</taxon>
        <taxon>Hymenoptera</taxon>
        <taxon>Apocrita</taxon>
        <taxon>Aculeata</taxon>
        <taxon>Vespoidea</taxon>
        <taxon>Vespidae</taxon>
        <taxon>Polistinae</taxon>
        <taxon>Polistini</taxon>
        <taxon>Polistes</taxon>
    </lineage>
</organism>
<keyword id="KW-0020">Allergen</keyword>
<keyword id="KW-1015">Disulfide bond</keyword>
<keyword id="KW-0325">Glycoprotein</keyword>
<keyword id="KW-0378">Hydrolase</keyword>
<keyword id="KW-0645">Protease</keyword>
<keyword id="KW-0964">Secreted</keyword>
<keyword id="KW-0720">Serine protease</keyword>
<keyword id="KW-0732">Signal</keyword>
<evidence type="ECO:0000250" key="1"/>
<evidence type="ECO:0000255" key="2"/>
<evidence type="ECO:0000255" key="3">
    <source>
        <dbReference type="PROSITE-ProRule" id="PRU00274"/>
    </source>
</evidence>
<proteinExistence type="evidence at transcript level"/>
<accession>Q7Z269</accession>
<reference key="1">
    <citation type="journal article" date="2001" name="J. Allergy Clin. Immunol.">
        <title>Cloning of a paper wasp venom serine protease allergen.</title>
        <authorList>
            <person name="Fitch C.D."/>
            <person name="Hoffman D.R."/>
            <person name="Schmidt M."/>
        </authorList>
    </citation>
    <scope>NUCLEOTIDE SEQUENCE [MRNA]</scope>
</reference>
<reference key="2">
    <citation type="journal article" date="2004" name="J. Allergy Clin. Immunol.">
        <title>Hymenoptera venom protease allergens.</title>
        <authorList>
            <person name="Winningham K.M."/>
            <person name="Fitch C.D."/>
            <person name="Schmidt M."/>
            <person name="Hoffman D.R."/>
        </authorList>
    </citation>
    <scope>NUCLEOTIDE SEQUENCE [MRNA]</scope>
    <source>
        <tissue>Venom gland</tissue>
    </source>
</reference>
<protein>
    <recommendedName>
        <fullName>Venom serine protease</fullName>
        <ecNumber>3.4.21.-</ecNumber>
    </recommendedName>
    <allergenName>Pol d 4</allergenName>
</protein>